<accession>A1TSJ4</accession>
<gene>
    <name evidence="1" type="primary">smpB</name>
    <name type="ordered locus">Aave_3374</name>
</gene>
<keyword id="KW-0963">Cytoplasm</keyword>
<keyword id="KW-0694">RNA-binding</keyword>
<reference key="1">
    <citation type="submission" date="2006-12" db="EMBL/GenBank/DDBJ databases">
        <title>Complete sequence of Acidovorax avenae subsp. citrulli AAC00-1.</title>
        <authorList>
            <person name="Copeland A."/>
            <person name="Lucas S."/>
            <person name="Lapidus A."/>
            <person name="Barry K."/>
            <person name="Detter J.C."/>
            <person name="Glavina del Rio T."/>
            <person name="Dalin E."/>
            <person name="Tice H."/>
            <person name="Pitluck S."/>
            <person name="Kiss H."/>
            <person name="Brettin T."/>
            <person name="Bruce D."/>
            <person name="Han C."/>
            <person name="Tapia R."/>
            <person name="Gilna P."/>
            <person name="Schmutz J."/>
            <person name="Larimer F."/>
            <person name="Land M."/>
            <person name="Hauser L."/>
            <person name="Kyrpides N."/>
            <person name="Kim E."/>
            <person name="Stahl D."/>
            <person name="Richardson P."/>
        </authorList>
    </citation>
    <scope>NUCLEOTIDE SEQUENCE [LARGE SCALE GENOMIC DNA]</scope>
    <source>
        <strain>AAC00-1</strain>
    </source>
</reference>
<protein>
    <recommendedName>
        <fullName evidence="1">SsrA-binding protein</fullName>
    </recommendedName>
    <alternativeName>
        <fullName evidence="1">Small protein B</fullName>
    </alternativeName>
</protein>
<evidence type="ECO:0000255" key="1">
    <source>
        <dbReference type="HAMAP-Rule" id="MF_00023"/>
    </source>
</evidence>
<evidence type="ECO:0000256" key="2">
    <source>
        <dbReference type="SAM" id="MobiDB-lite"/>
    </source>
</evidence>
<feature type="chain" id="PRO_1000001988" description="SsrA-binding protein">
    <location>
        <begin position="1"/>
        <end position="157"/>
    </location>
</feature>
<feature type="region of interest" description="Disordered" evidence="2">
    <location>
        <begin position="132"/>
        <end position="157"/>
    </location>
</feature>
<name>SSRP_PARC0</name>
<dbReference type="EMBL" id="CP000512">
    <property type="protein sequence ID" value="ABM33932.1"/>
    <property type="molecule type" value="Genomic_DNA"/>
</dbReference>
<dbReference type="RefSeq" id="WP_011796433.1">
    <property type="nucleotide sequence ID" value="NC_008752.1"/>
</dbReference>
<dbReference type="SMR" id="A1TSJ4"/>
<dbReference type="STRING" id="397945.Aave_3374"/>
<dbReference type="GeneID" id="79793063"/>
<dbReference type="KEGG" id="aav:Aave_3374"/>
<dbReference type="eggNOG" id="COG0691">
    <property type="taxonomic scope" value="Bacteria"/>
</dbReference>
<dbReference type="HOGENOM" id="CLU_108953_3_0_4"/>
<dbReference type="OrthoDB" id="9805462at2"/>
<dbReference type="Proteomes" id="UP000002596">
    <property type="component" value="Chromosome"/>
</dbReference>
<dbReference type="GO" id="GO:0005829">
    <property type="term" value="C:cytosol"/>
    <property type="evidence" value="ECO:0007669"/>
    <property type="project" value="TreeGrafter"/>
</dbReference>
<dbReference type="GO" id="GO:0003723">
    <property type="term" value="F:RNA binding"/>
    <property type="evidence" value="ECO:0007669"/>
    <property type="project" value="UniProtKB-UniRule"/>
</dbReference>
<dbReference type="GO" id="GO:0070929">
    <property type="term" value="P:trans-translation"/>
    <property type="evidence" value="ECO:0007669"/>
    <property type="project" value="UniProtKB-UniRule"/>
</dbReference>
<dbReference type="CDD" id="cd09294">
    <property type="entry name" value="SmpB"/>
    <property type="match status" value="1"/>
</dbReference>
<dbReference type="Gene3D" id="2.40.280.10">
    <property type="match status" value="1"/>
</dbReference>
<dbReference type="HAMAP" id="MF_00023">
    <property type="entry name" value="SmpB"/>
    <property type="match status" value="1"/>
</dbReference>
<dbReference type="InterPro" id="IPR023620">
    <property type="entry name" value="SmpB"/>
</dbReference>
<dbReference type="InterPro" id="IPR000037">
    <property type="entry name" value="SsrA-bd_prot"/>
</dbReference>
<dbReference type="InterPro" id="IPR020081">
    <property type="entry name" value="SsrA-bd_prot_CS"/>
</dbReference>
<dbReference type="NCBIfam" id="NF003843">
    <property type="entry name" value="PRK05422.1"/>
    <property type="match status" value="1"/>
</dbReference>
<dbReference type="NCBIfam" id="TIGR00086">
    <property type="entry name" value="smpB"/>
    <property type="match status" value="1"/>
</dbReference>
<dbReference type="PANTHER" id="PTHR30308:SF2">
    <property type="entry name" value="SSRA-BINDING PROTEIN"/>
    <property type="match status" value="1"/>
</dbReference>
<dbReference type="PANTHER" id="PTHR30308">
    <property type="entry name" value="TMRNA-BINDING COMPONENT OF TRANS-TRANSLATION TAGGING COMPLEX"/>
    <property type="match status" value="1"/>
</dbReference>
<dbReference type="Pfam" id="PF01668">
    <property type="entry name" value="SmpB"/>
    <property type="match status" value="1"/>
</dbReference>
<dbReference type="SUPFAM" id="SSF74982">
    <property type="entry name" value="Small protein B (SmpB)"/>
    <property type="match status" value="1"/>
</dbReference>
<dbReference type="PROSITE" id="PS01317">
    <property type="entry name" value="SSRP"/>
    <property type="match status" value="1"/>
</dbReference>
<proteinExistence type="inferred from homology"/>
<organism>
    <name type="scientific">Paracidovorax citrulli (strain AAC00-1)</name>
    <name type="common">Acidovorax citrulli</name>
    <dbReference type="NCBI Taxonomy" id="397945"/>
    <lineage>
        <taxon>Bacteria</taxon>
        <taxon>Pseudomonadati</taxon>
        <taxon>Pseudomonadota</taxon>
        <taxon>Betaproteobacteria</taxon>
        <taxon>Burkholderiales</taxon>
        <taxon>Comamonadaceae</taxon>
        <taxon>Paracidovorax</taxon>
    </lineage>
</organism>
<comment type="function">
    <text evidence="1">Required for rescue of stalled ribosomes mediated by trans-translation. Binds to transfer-messenger RNA (tmRNA), required for stable association of tmRNA with ribosomes. tmRNA and SmpB together mimic tRNA shape, replacing the anticodon stem-loop with SmpB. tmRNA is encoded by the ssrA gene; the 2 termini fold to resemble tRNA(Ala) and it encodes a 'tag peptide', a short internal open reading frame. During trans-translation Ala-aminoacylated tmRNA acts like a tRNA, entering the A-site of stalled ribosomes, displacing the stalled mRNA. The ribosome then switches to translate the ORF on the tmRNA; the nascent peptide is terminated with the 'tag peptide' encoded by the tmRNA and targeted for degradation. The ribosome is freed to recommence translation, which seems to be the essential function of trans-translation.</text>
</comment>
<comment type="subcellular location">
    <subcellularLocation>
        <location evidence="1">Cytoplasm</location>
    </subcellularLocation>
    <text evidence="1">The tmRNA-SmpB complex associates with stalled 70S ribosomes.</text>
</comment>
<comment type="similarity">
    <text evidence="1">Belongs to the SmpB family.</text>
</comment>
<sequence length="157" mass="18043">MAKKPETLSRIADNKKAAFNYFFEERHEAGMVLHGWEVKALREGKVQLTDGYVVIREGELYLIGCQINPLKTASTHVSPDAVRTKKLLLHKDEIKRLTAKVEQKGYTLVPLNLHWTNGRAKCEIALAKGKAEHDKRDTIKEREGKREVERAMKSRHR</sequence>